<name>CLN5C_DICDI</name>
<gene>
    <name type="primary">cln5lc</name>
    <name type="ORF">DDB_G0293236</name>
</gene>
<organism>
    <name type="scientific">Dictyostelium discoideum</name>
    <name type="common">Social amoeba</name>
    <dbReference type="NCBI Taxonomy" id="44689"/>
    <lineage>
        <taxon>Eukaryota</taxon>
        <taxon>Amoebozoa</taxon>
        <taxon>Evosea</taxon>
        <taxon>Eumycetozoa</taxon>
        <taxon>Dictyostelia</taxon>
        <taxon>Dictyosteliales</taxon>
        <taxon>Dictyosteliaceae</taxon>
        <taxon>Dictyostelium</taxon>
    </lineage>
</organism>
<evidence type="ECO:0000255" key="1"/>
<evidence type="ECO:0000305" key="2"/>
<comment type="subcellular location">
    <subcellularLocation>
        <location evidence="2">Membrane</location>
        <topology evidence="2">Single-pass membrane protein</topology>
    </subcellularLocation>
</comment>
<comment type="similarity">
    <text evidence="2">Belongs to the CLN5 family.</text>
</comment>
<reference key="1">
    <citation type="journal article" date="2005" name="Nature">
        <title>The genome of the social amoeba Dictyostelium discoideum.</title>
        <authorList>
            <person name="Eichinger L."/>
            <person name="Pachebat J.A."/>
            <person name="Gloeckner G."/>
            <person name="Rajandream M.A."/>
            <person name="Sucgang R."/>
            <person name="Berriman M."/>
            <person name="Song J."/>
            <person name="Olsen R."/>
            <person name="Szafranski K."/>
            <person name="Xu Q."/>
            <person name="Tunggal B."/>
            <person name="Kummerfeld S."/>
            <person name="Madera M."/>
            <person name="Konfortov B.A."/>
            <person name="Rivero F."/>
            <person name="Bankier A.T."/>
            <person name="Lehmann R."/>
            <person name="Hamlin N."/>
            <person name="Davies R."/>
            <person name="Gaudet P."/>
            <person name="Fey P."/>
            <person name="Pilcher K."/>
            <person name="Chen G."/>
            <person name="Saunders D."/>
            <person name="Sodergren E.J."/>
            <person name="Davis P."/>
            <person name="Kerhornou A."/>
            <person name="Nie X."/>
            <person name="Hall N."/>
            <person name="Anjard C."/>
            <person name="Hemphill L."/>
            <person name="Bason N."/>
            <person name="Farbrother P."/>
            <person name="Desany B."/>
            <person name="Just E."/>
            <person name="Morio T."/>
            <person name="Rost R."/>
            <person name="Churcher C.M."/>
            <person name="Cooper J."/>
            <person name="Haydock S."/>
            <person name="van Driessche N."/>
            <person name="Cronin A."/>
            <person name="Goodhead I."/>
            <person name="Muzny D.M."/>
            <person name="Mourier T."/>
            <person name="Pain A."/>
            <person name="Lu M."/>
            <person name="Harper D."/>
            <person name="Lindsay R."/>
            <person name="Hauser H."/>
            <person name="James K.D."/>
            <person name="Quiles M."/>
            <person name="Madan Babu M."/>
            <person name="Saito T."/>
            <person name="Buchrieser C."/>
            <person name="Wardroper A."/>
            <person name="Felder M."/>
            <person name="Thangavelu M."/>
            <person name="Johnson D."/>
            <person name="Knights A."/>
            <person name="Loulseged H."/>
            <person name="Mungall K.L."/>
            <person name="Oliver K."/>
            <person name="Price C."/>
            <person name="Quail M.A."/>
            <person name="Urushihara H."/>
            <person name="Hernandez J."/>
            <person name="Rabbinowitsch E."/>
            <person name="Steffen D."/>
            <person name="Sanders M."/>
            <person name="Ma J."/>
            <person name="Kohara Y."/>
            <person name="Sharp S."/>
            <person name="Simmonds M.N."/>
            <person name="Spiegler S."/>
            <person name="Tivey A."/>
            <person name="Sugano S."/>
            <person name="White B."/>
            <person name="Walker D."/>
            <person name="Woodward J.R."/>
            <person name="Winckler T."/>
            <person name="Tanaka Y."/>
            <person name="Shaulsky G."/>
            <person name="Schleicher M."/>
            <person name="Weinstock G.M."/>
            <person name="Rosenthal A."/>
            <person name="Cox E.C."/>
            <person name="Chisholm R.L."/>
            <person name="Gibbs R.A."/>
            <person name="Loomis W.F."/>
            <person name="Platzer M."/>
            <person name="Kay R.R."/>
            <person name="Williams J.G."/>
            <person name="Dear P.H."/>
            <person name="Noegel A.A."/>
            <person name="Barrell B.G."/>
            <person name="Kuspa A."/>
        </authorList>
    </citation>
    <scope>NUCLEOTIDE SEQUENCE [LARGE SCALE GENOMIC DNA]</scope>
    <source>
        <strain>AX4</strain>
    </source>
</reference>
<feature type="signal peptide" evidence="1">
    <location>
        <begin position="1"/>
        <end position="24"/>
    </location>
</feature>
<feature type="chain" id="PRO_0000330476" description="Cln5-like protein 3">
    <location>
        <begin position="25"/>
        <end position="439"/>
    </location>
</feature>
<feature type="transmembrane region" description="Helical" evidence="1">
    <location>
        <begin position="371"/>
        <end position="391"/>
    </location>
</feature>
<feature type="glycosylation site" description="N-linked (GlcNAc...) asparagine" evidence="1">
    <location>
        <position position="93"/>
    </location>
</feature>
<feature type="glycosylation site" description="N-linked (GlcNAc...) asparagine" evidence="1">
    <location>
        <position position="112"/>
    </location>
</feature>
<feature type="glycosylation site" description="N-linked (GlcNAc...) asparagine" evidence="1">
    <location>
        <position position="122"/>
    </location>
</feature>
<feature type="glycosylation site" description="N-linked (GlcNAc...) asparagine" evidence="1">
    <location>
        <position position="138"/>
    </location>
</feature>
<feature type="glycosylation site" description="N-linked (GlcNAc...) asparagine" evidence="1">
    <location>
        <position position="168"/>
    </location>
</feature>
<feature type="glycosylation site" description="N-linked (GlcNAc...) asparagine" evidence="1">
    <location>
        <position position="219"/>
    </location>
</feature>
<feature type="glycosylation site" description="N-linked (GlcNAc...) asparagine" evidence="1">
    <location>
        <position position="268"/>
    </location>
</feature>
<feature type="glycosylation site" description="N-linked (GlcNAc...) asparagine" evidence="1">
    <location>
        <position position="289"/>
    </location>
</feature>
<feature type="glycosylation site" description="N-linked (GlcNAc...) asparagine" evidence="1">
    <location>
        <position position="304"/>
    </location>
</feature>
<feature type="glycosylation site" description="N-linked (GlcNAc...) asparagine" evidence="1">
    <location>
        <position position="359"/>
    </location>
</feature>
<proteinExistence type="inferred from homology"/>
<protein>
    <recommendedName>
        <fullName>Cln5-like protein 3</fullName>
    </recommendedName>
</protein>
<dbReference type="EMBL" id="AAFI02000200">
    <property type="protein sequence ID" value="EAL60817.1"/>
    <property type="molecule type" value="Genomic_DNA"/>
</dbReference>
<dbReference type="RefSeq" id="XP_629229.1">
    <property type="nucleotide sequence ID" value="XM_629227.1"/>
</dbReference>
<dbReference type="SMR" id="Q54C37"/>
<dbReference type="FunCoup" id="Q54C37">
    <property type="interactions" value="2"/>
</dbReference>
<dbReference type="GlyCosmos" id="Q54C37">
    <property type="glycosylation" value="10 sites, No reported glycans"/>
</dbReference>
<dbReference type="GlyGen" id="Q54C37">
    <property type="glycosylation" value="10 sites"/>
</dbReference>
<dbReference type="PaxDb" id="44689-DDB0191840"/>
<dbReference type="EnsemblProtists" id="EAL60817">
    <property type="protein sequence ID" value="EAL60817"/>
    <property type="gene ID" value="DDB_G0293236"/>
</dbReference>
<dbReference type="GeneID" id="8629111"/>
<dbReference type="KEGG" id="ddi:DDB_G0293236"/>
<dbReference type="dictyBase" id="DDB_G0293236"/>
<dbReference type="VEuPathDB" id="AmoebaDB:DDB_G0293236"/>
<dbReference type="eggNOG" id="ENOG502RHN2">
    <property type="taxonomic scope" value="Eukaryota"/>
</dbReference>
<dbReference type="HOGENOM" id="CLU_062132_0_0_1"/>
<dbReference type="InParanoid" id="Q54C37"/>
<dbReference type="PhylomeDB" id="Q54C37"/>
<dbReference type="PRO" id="PR:Q54C37"/>
<dbReference type="Proteomes" id="UP000002195">
    <property type="component" value="Chromosome 6"/>
</dbReference>
<dbReference type="GO" id="GO:0005765">
    <property type="term" value="C:lysosomal membrane"/>
    <property type="evidence" value="ECO:0000318"/>
    <property type="project" value="GO_Central"/>
</dbReference>
<dbReference type="GO" id="GO:0016798">
    <property type="term" value="F:hydrolase activity, acting on glycosyl bonds"/>
    <property type="evidence" value="ECO:0000318"/>
    <property type="project" value="GO_Central"/>
</dbReference>
<dbReference type="GO" id="GO:0007040">
    <property type="term" value="P:lysosome organization"/>
    <property type="evidence" value="ECO:0000318"/>
    <property type="project" value="GO_Central"/>
</dbReference>
<dbReference type="InterPro" id="IPR026138">
    <property type="entry name" value="CLN5"/>
</dbReference>
<dbReference type="PANTHER" id="PTHR15380">
    <property type="entry name" value="CEROID-LIPOFUSCINOSIS, NEURONAL 5"/>
    <property type="match status" value="1"/>
</dbReference>
<dbReference type="PANTHER" id="PTHR15380:SF1">
    <property type="entry name" value="CLN5-LIKE PROTEIN 1-RELATED"/>
    <property type="match status" value="1"/>
</dbReference>
<dbReference type="Pfam" id="PF15014">
    <property type="entry name" value="CLN5"/>
    <property type="match status" value="1"/>
</dbReference>
<accession>Q54C37</accession>
<keyword id="KW-0325">Glycoprotein</keyword>
<keyword id="KW-0472">Membrane</keyword>
<keyword id="KW-1185">Reference proteome</keyword>
<keyword id="KW-0732">Signal</keyword>
<keyword id="KW-0812">Transmembrane</keyword>
<keyword id="KW-1133">Transmembrane helix</keyword>
<sequence length="439" mass="49298">MKNMLNIILTLTIIFIGLIKISISSDSGSSENGIYFYTYDTICEFTNSIRDDDQYELYYVQAPLMYAIYGDLFEKINAYHSGVGFYNLNGGPNISIDYFAGPTLEDALIPQNITKDSQGNYNLTWNTYGLIEVTNYINETYWSKRELIMYGLTGLQVKQYLSWAPIYNQTHPVYNLFSIASADASGSGDNGYLETILHNLGIGGGGGGSGSENLIVYQNSSTCDDFVWASFNTIYQLGGTLVGMQSNPPKDQITLFTTDEPTIVDYNNITQRNQLASFYINLMGIANKNESALQIFQELISLFNGTFYCYIDGVYYELHLSKPTPISFTYQPSPMPTGQRNSNSIETLNNCYSKSSTDNQSFFNRFSKIQIIFISIAIGFGVVIILYISIGIMVNKSRGKSGTNLIPNKKLWTSIGSKFKRDNNKNNYKPLLYNENTIQ</sequence>